<name>ERS2_ARATH</name>
<proteinExistence type="evidence at protein level"/>
<feature type="chain" id="PRO_0000378143" description="Ethylene response sensor 2">
    <location>
        <begin position="1"/>
        <end position="645"/>
    </location>
</feature>
<feature type="transmembrane region" description="Helical" evidence="2">
    <location>
        <begin position="5"/>
        <end position="25"/>
    </location>
</feature>
<feature type="transmembrane region" description="Helical" evidence="2">
    <location>
        <begin position="54"/>
        <end position="74"/>
    </location>
</feature>
<feature type="transmembrane region" description="Helical" evidence="2">
    <location>
        <begin position="86"/>
        <end position="106"/>
    </location>
</feature>
<feature type="transmembrane region" description="Helical" evidence="2">
    <location>
        <begin position="125"/>
        <end position="145"/>
    </location>
</feature>
<feature type="domain" description="GAF">
    <location>
        <begin position="190"/>
        <end position="346"/>
    </location>
</feature>
<feature type="domain" description="Histidine kinase">
    <location>
        <begin position="389"/>
        <end position="623"/>
    </location>
</feature>
<feature type="binding site" evidence="1">
    <location>
        <position position="97"/>
    </location>
    <ligand>
        <name>Cu cation</name>
        <dbReference type="ChEBI" id="CHEBI:23378"/>
    </ligand>
</feature>
<feature type="binding site" evidence="1">
    <location>
        <position position="101"/>
    </location>
    <ligand>
        <name>Cu cation</name>
        <dbReference type="ChEBI" id="CHEBI:23378"/>
    </ligand>
</feature>
<feature type="disulfide bond" description="Interchain" evidence="1">
    <location>
        <position position="34"/>
    </location>
</feature>
<feature type="disulfide bond" description="Interchain" evidence="1">
    <location>
        <position position="36"/>
    </location>
</feature>
<feature type="sequence variant" description="In strain: cv. Bla-10, cv. Cvi-0, cv. Ga-0 and cv. Ts-5.">
    <original>F</original>
    <variation>FF</variation>
    <location>
        <position position="14"/>
    </location>
</feature>
<feature type="sequence variant" description="In strain: cv. El-0, Gy-0 and Kn-0.">
    <original>A</original>
    <variation>E</variation>
    <location>
        <position position="25"/>
    </location>
</feature>
<feature type="sequence variant" description="In strain: cv. El-0, Gy-0 and Kn-0.">
    <original>D</original>
    <variation>E</variation>
    <location>
        <position position="38"/>
    </location>
</feature>
<feature type="sequence variant" description="In strain: cv. Gu-0 and cv. Ove-0.">
    <original>I</original>
    <variation>V</variation>
    <location>
        <position position="61"/>
    </location>
</feature>
<feature type="sequence variant" description="In strain: cv. Se-0.">
    <original>G</original>
    <variation>V</variation>
    <location>
        <position position="244"/>
    </location>
</feature>
<feature type="mutagenesis site" description="In ers2-1; ethylene insensitivity." evidence="4">
    <original>P</original>
    <variation>L</variation>
    <location>
        <position position="67"/>
    </location>
</feature>
<feature type="mutagenesis site" description="In ers2-2; ethylene insensitivity." evidence="4">
    <original>I</original>
    <variation>F</variation>
    <location>
        <position position="94"/>
    </location>
</feature>
<comment type="function">
    <text>Ethylene receptor related to bacterial two-component regulators. Acts as a redundant negative regulator of ethylene signaling.</text>
</comment>
<comment type="cofactor">
    <cofactor evidence="1">
        <name>Cu cation</name>
        <dbReference type="ChEBI" id="CHEBI:23378"/>
    </cofactor>
    <text evidence="1">Binds 1 copper ion per dimer.</text>
</comment>
<comment type="subunit">
    <text>Heteromer with ETR1.</text>
</comment>
<comment type="interaction">
    <interactant intactId="EBI-1787556">
        <id>P93825</id>
    </interactant>
    <interactant intactId="EBI-1787556">
        <id>P93825</id>
        <label>ERS2</label>
    </interactant>
    <organismsDiffer>false</organismsDiffer>
    <experiments>2</experiments>
</comment>
<comment type="interaction">
    <interactant intactId="EBI-1787556">
        <id>P93825</id>
    </interactant>
    <interactant intactId="EBI-1606682">
        <id>P49333</id>
        <label>ETR1</label>
    </interactant>
    <organismsDiffer>false</organismsDiffer>
    <experiments>2</experiments>
</comment>
<comment type="subcellular location">
    <subcellularLocation>
        <location evidence="5">Endoplasmic reticulum membrane</location>
        <topology evidence="5">Multi-pass membrane protein</topology>
    </subcellularLocation>
</comment>
<comment type="tissue specificity">
    <text evidence="4">Expressed in etiolated seedlings, leaves, roots and stems. Highly expressed in flowers, stamens, pollen cells, tapetum cells, carpels and ovules.</text>
</comment>
<comment type="induction">
    <text evidence="4">By ethylene.</text>
</comment>
<comment type="PTM">
    <text evidence="3">Autophosphorylated predominantly on Ser residues.</text>
</comment>
<comment type="similarity">
    <text evidence="5">Belongs to the ethylene receptor family.</text>
</comment>
<organism>
    <name type="scientific">Arabidopsis thaliana</name>
    <name type="common">Mouse-ear cress</name>
    <dbReference type="NCBI Taxonomy" id="3702"/>
    <lineage>
        <taxon>Eukaryota</taxon>
        <taxon>Viridiplantae</taxon>
        <taxon>Streptophyta</taxon>
        <taxon>Embryophyta</taxon>
        <taxon>Tracheophyta</taxon>
        <taxon>Spermatophyta</taxon>
        <taxon>Magnoliopsida</taxon>
        <taxon>eudicotyledons</taxon>
        <taxon>Gunneridae</taxon>
        <taxon>Pentapetalae</taxon>
        <taxon>rosids</taxon>
        <taxon>malvids</taxon>
        <taxon>Brassicales</taxon>
        <taxon>Brassicaceae</taxon>
        <taxon>Camelineae</taxon>
        <taxon>Arabidopsis</taxon>
    </lineage>
</organism>
<gene>
    <name type="primary">ERS2</name>
    <name type="ordered locus">At1g04310</name>
    <name type="ORF">F19P19.25</name>
</gene>
<sequence length="645" mass="72192">MLKTLLVQWLVFFFFFLIGSVVTAAEDDGSLSLCNCDDEDSLFSYETILNSQKVGDFLIAIAYFSIPIELVYFVSRTNVPSPYNWVVCEFIAFIVLCGMTHLLAGFTYGPHWPWVMTAVTVFKMLTGIVSFLTALSLVTLLPLLLKAKVREFMLSKKTRELDREVGIIMKQTETSLHVRMLTTKIRTSLDRHTILYTTLVELSKTLGLKNCAVWIPNEIKTEMNLTHELRPRIDDENENEHFGGYAGFSIPISESDVVRIKRSEEVNMLSPGSVLASVTSRGKSGPTVGIRVPMLRVCNFKGGTPEAIHMCYAILVCVLPLRQPQAWTYQELEIVKVVADQVAVAISHAVILEESQLMREKLAEQNRALQVARENALRANQAKAAFEQMMSDAMRCPVRSILGLLPLILQDGKLPENQTVIVDAMRRTSELLVQLVNNAGDINNGTIRAAETHYFSLHSVVKESACVARCLCMANGFGFSAEVYRALPDYVVGDDRKVFQAILHMLGVLMNRKIKGNVTFWVFPESGNSDVSERKDIQEAVWRHCYSKEYMEVRFGFEVTAEGEESSSSSSGSNLEEEEENPSLNACQNIVKYMQGNIRVVEDGLGLVKSVSVVFRFQLRRSMMSRGGGYSGETFRTSTPPSTSH</sequence>
<evidence type="ECO:0000250" key="1"/>
<evidence type="ECO:0000255" key="2"/>
<evidence type="ECO:0000269" key="3">
    <source>
    </source>
</evidence>
<evidence type="ECO:0000269" key="4">
    <source>
    </source>
</evidence>
<evidence type="ECO:0000305" key="5"/>
<dbReference type="EC" id="2.7.11.-"/>
<dbReference type="EMBL" id="AF047976">
    <property type="protein sequence ID" value="AAC62209.1"/>
    <property type="molecule type" value="Genomic_DNA"/>
</dbReference>
<dbReference type="EMBL" id="AC000104">
    <property type="protein sequence ID" value="AAB70445.1"/>
    <property type="molecule type" value="Genomic_DNA"/>
</dbReference>
<dbReference type="EMBL" id="CP002684">
    <property type="protein sequence ID" value="AEE27684.1"/>
    <property type="molecule type" value="Genomic_DNA"/>
</dbReference>
<dbReference type="EMBL" id="CP002684">
    <property type="protein sequence ID" value="ANM61043.1"/>
    <property type="molecule type" value="Genomic_DNA"/>
</dbReference>
<dbReference type="EMBL" id="EU351674">
    <property type="protein sequence ID" value="ABY67593.1"/>
    <property type="molecule type" value="Genomic_DNA"/>
</dbReference>
<dbReference type="EMBL" id="EU351675">
    <property type="protein sequence ID" value="ABY67594.1"/>
    <property type="molecule type" value="Genomic_DNA"/>
</dbReference>
<dbReference type="EMBL" id="EU351676">
    <property type="protein sequence ID" value="ABY67595.1"/>
    <property type="molecule type" value="Genomic_DNA"/>
</dbReference>
<dbReference type="EMBL" id="EU351677">
    <property type="protein sequence ID" value="ABY67596.1"/>
    <property type="molecule type" value="Genomic_DNA"/>
</dbReference>
<dbReference type="EMBL" id="EU351678">
    <property type="protein sequence ID" value="ABY67597.1"/>
    <property type="molecule type" value="Genomic_DNA"/>
</dbReference>
<dbReference type="EMBL" id="EU351679">
    <property type="protein sequence ID" value="ABY67598.1"/>
    <property type="molecule type" value="Genomic_DNA"/>
</dbReference>
<dbReference type="EMBL" id="EU351680">
    <property type="protein sequence ID" value="ABY67599.1"/>
    <property type="molecule type" value="Genomic_DNA"/>
</dbReference>
<dbReference type="EMBL" id="EU351681">
    <property type="protein sequence ID" value="ABY67600.1"/>
    <property type="molecule type" value="Genomic_DNA"/>
</dbReference>
<dbReference type="EMBL" id="EU351682">
    <property type="protein sequence ID" value="ABY67601.1"/>
    <property type="molecule type" value="Genomic_DNA"/>
</dbReference>
<dbReference type="EMBL" id="EU351683">
    <property type="protein sequence ID" value="ABY67602.1"/>
    <property type="molecule type" value="Genomic_DNA"/>
</dbReference>
<dbReference type="EMBL" id="EU351684">
    <property type="protein sequence ID" value="ABY67603.1"/>
    <property type="molecule type" value="Genomic_DNA"/>
</dbReference>
<dbReference type="EMBL" id="EU351685">
    <property type="protein sequence ID" value="ABY67604.1"/>
    <property type="molecule type" value="Genomic_DNA"/>
</dbReference>
<dbReference type="EMBL" id="EU351686">
    <property type="protein sequence ID" value="ABY67605.1"/>
    <property type="molecule type" value="Genomic_DNA"/>
</dbReference>
<dbReference type="EMBL" id="EU351687">
    <property type="protein sequence ID" value="ABY67606.1"/>
    <property type="molecule type" value="Genomic_DNA"/>
</dbReference>
<dbReference type="EMBL" id="EU351688">
    <property type="protein sequence ID" value="ABY67607.1"/>
    <property type="molecule type" value="Genomic_DNA"/>
</dbReference>
<dbReference type="EMBL" id="EU351689">
    <property type="protein sequence ID" value="ABY67608.1"/>
    <property type="molecule type" value="Genomic_DNA"/>
</dbReference>
<dbReference type="EMBL" id="EU351690">
    <property type="protein sequence ID" value="ABY67609.1"/>
    <property type="molecule type" value="Genomic_DNA"/>
</dbReference>
<dbReference type="EMBL" id="EU351691">
    <property type="protein sequence ID" value="ABY67610.1"/>
    <property type="molecule type" value="Genomic_DNA"/>
</dbReference>
<dbReference type="EMBL" id="EU351692">
    <property type="protein sequence ID" value="ABY67611.1"/>
    <property type="molecule type" value="Genomic_DNA"/>
</dbReference>
<dbReference type="EMBL" id="EU351693">
    <property type="protein sequence ID" value="ABY67612.1"/>
    <property type="molecule type" value="Genomic_DNA"/>
</dbReference>
<dbReference type="EMBL" id="EU351694">
    <property type="protein sequence ID" value="ABY67613.1"/>
    <property type="molecule type" value="Genomic_DNA"/>
</dbReference>
<dbReference type="EMBL" id="EU351695">
    <property type="protein sequence ID" value="ABY67614.1"/>
    <property type="molecule type" value="Genomic_DNA"/>
</dbReference>
<dbReference type="EMBL" id="EU351696">
    <property type="protein sequence ID" value="ABY67615.1"/>
    <property type="molecule type" value="Genomic_DNA"/>
</dbReference>
<dbReference type="EMBL" id="EU351697">
    <property type="protein sequence ID" value="ABY67616.1"/>
    <property type="molecule type" value="Genomic_DNA"/>
</dbReference>
<dbReference type="EMBL" id="EU351698">
    <property type="protein sequence ID" value="ABY67617.1"/>
    <property type="molecule type" value="Genomic_DNA"/>
</dbReference>
<dbReference type="EMBL" id="EU351699">
    <property type="protein sequence ID" value="ABY67618.1"/>
    <property type="molecule type" value="Genomic_DNA"/>
</dbReference>
<dbReference type="EMBL" id="EU351700">
    <property type="protein sequence ID" value="ABY67619.1"/>
    <property type="molecule type" value="Genomic_DNA"/>
</dbReference>
<dbReference type="EMBL" id="EU351701">
    <property type="protein sequence ID" value="ABY67620.1"/>
    <property type="molecule type" value="Genomic_DNA"/>
</dbReference>
<dbReference type="EMBL" id="EU351702">
    <property type="protein sequence ID" value="ABY67621.1"/>
    <property type="molecule type" value="Genomic_DNA"/>
</dbReference>
<dbReference type="EMBL" id="EU351703">
    <property type="protein sequence ID" value="ABY67622.1"/>
    <property type="molecule type" value="Genomic_DNA"/>
</dbReference>
<dbReference type="EMBL" id="EU351704">
    <property type="protein sequence ID" value="ABY67623.1"/>
    <property type="molecule type" value="Genomic_DNA"/>
</dbReference>
<dbReference type="EMBL" id="EU351705">
    <property type="protein sequence ID" value="ABY67624.1"/>
    <property type="molecule type" value="Genomic_DNA"/>
</dbReference>
<dbReference type="EMBL" id="EU351706">
    <property type="protein sequence ID" value="ABY67625.1"/>
    <property type="molecule type" value="Genomic_DNA"/>
</dbReference>
<dbReference type="EMBL" id="EU351707">
    <property type="protein sequence ID" value="ABY67626.1"/>
    <property type="molecule type" value="Genomic_DNA"/>
</dbReference>
<dbReference type="EMBL" id="EU351708">
    <property type="protein sequence ID" value="ABY67627.1"/>
    <property type="molecule type" value="Genomic_DNA"/>
</dbReference>
<dbReference type="EMBL" id="EU351709">
    <property type="protein sequence ID" value="ABY67628.1"/>
    <property type="molecule type" value="Genomic_DNA"/>
</dbReference>
<dbReference type="EMBL" id="EU351710">
    <property type="protein sequence ID" value="ABY67629.1"/>
    <property type="molecule type" value="Genomic_DNA"/>
</dbReference>
<dbReference type="EMBL" id="EU351711">
    <property type="protein sequence ID" value="ABY67630.1"/>
    <property type="molecule type" value="Genomic_DNA"/>
</dbReference>
<dbReference type="EMBL" id="EU351712">
    <property type="protein sequence ID" value="ABY67631.1"/>
    <property type="molecule type" value="Genomic_DNA"/>
</dbReference>
<dbReference type="EMBL" id="EU351713">
    <property type="protein sequence ID" value="ABY67632.1"/>
    <property type="molecule type" value="Genomic_DNA"/>
</dbReference>
<dbReference type="EMBL" id="EU351714">
    <property type="protein sequence ID" value="ABY67633.1"/>
    <property type="molecule type" value="Genomic_DNA"/>
</dbReference>
<dbReference type="EMBL" id="EU351715">
    <property type="protein sequence ID" value="ABY67634.1"/>
    <property type="molecule type" value="Genomic_DNA"/>
</dbReference>
<dbReference type="EMBL" id="EU351716">
    <property type="protein sequence ID" value="ABY67635.1"/>
    <property type="molecule type" value="Genomic_DNA"/>
</dbReference>
<dbReference type="EMBL" id="EU351717">
    <property type="protein sequence ID" value="ABY67636.1"/>
    <property type="molecule type" value="Genomic_DNA"/>
</dbReference>
<dbReference type="PIR" id="F86174">
    <property type="entry name" value="F86174"/>
</dbReference>
<dbReference type="RefSeq" id="NP_001323287.1">
    <property type="nucleotide sequence ID" value="NM_001331475.1"/>
</dbReference>
<dbReference type="RefSeq" id="NP_171927.1">
    <property type="nucleotide sequence ID" value="NM_100312.4"/>
</dbReference>
<dbReference type="SMR" id="P93825"/>
<dbReference type="BioGRID" id="24784">
    <property type="interactions" value="16"/>
</dbReference>
<dbReference type="FunCoup" id="P93825">
    <property type="interactions" value="377"/>
</dbReference>
<dbReference type="IntAct" id="P93825">
    <property type="interactions" value="11"/>
</dbReference>
<dbReference type="STRING" id="3702.P93825"/>
<dbReference type="GlyGen" id="P93825">
    <property type="glycosylation" value="1 site"/>
</dbReference>
<dbReference type="PaxDb" id="3702-AT1G04310.1"/>
<dbReference type="ProteomicsDB" id="220704"/>
<dbReference type="EnsemblPlants" id="AT1G04310.1">
    <property type="protein sequence ID" value="AT1G04310.1"/>
    <property type="gene ID" value="AT1G04310"/>
</dbReference>
<dbReference type="EnsemblPlants" id="AT1G04310.2">
    <property type="protein sequence ID" value="AT1G04310.2"/>
    <property type="gene ID" value="AT1G04310"/>
</dbReference>
<dbReference type="GeneID" id="839549"/>
<dbReference type="Gramene" id="AT1G04310.1">
    <property type="protein sequence ID" value="AT1G04310.1"/>
    <property type="gene ID" value="AT1G04310"/>
</dbReference>
<dbReference type="Gramene" id="AT1G04310.2">
    <property type="protein sequence ID" value="AT1G04310.2"/>
    <property type="gene ID" value="AT1G04310"/>
</dbReference>
<dbReference type="KEGG" id="ath:AT1G04310"/>
<dbReference type="Araport" id="AT1G04310"/>
<dbReference type="TAIR" id="AT1G04310">
    <property type="gene designation" value="ERS2"/>
</dbReference>
<dbReference type="eggNOG" id="KOG0519">
    <property type="taxonomic scope" value="Eukaryota"/>
</dbReference>
<dbReference type="HOGENOM" id="CLU_000445_114_48_1"/>
<dbReference type="InParanoid" id="P93825"/>
<dbReference type="OMA" id="GMSEYVE"/>
<dbReference type="PhylomeDB" id="P93825"/>
<dbReference type="PRO" id="PR:P93825"/>
<dbReference type="Proteomes" id="UP000006548">
    <property type="component" value="Chromosome 1"/>
</dbReference>
<dbReference type="ExpressionAtlas" id="P93825">
    <property type="expression patterns" value="baseline and differential"/>
</dbReference>
<dbReference type="GO" id="GO:0005783">
    <property type="term" value="C:endoplasmic reticulum"/>
    <property type="evidence" value="ECO:0000314"/>
    <property type="project" value="TAIR"/>
</dbReference>
<dbReference type="GO" id="GO:0005789">
    <property type="term" value="C:endoplasmic reticulum membrane"/>
    <property type="evidence" value="ECO:0007669"/>
    <property type="project" value="UniProtKB-SubCell"/>
</dbReference>
<dbReference type="GO" id="GO:0005524">
    <property type="term" value="F:ATP binding"/>
    <property type="evidence" value="ECO:0007669"/>
    <property type="project" value="UniProtKB-KW"/>
</dbReference>
<dbReference type="GO" id="GO:0051740">
    <property type="term" value="F:ethylene binding"/>
    <property type="evidence" value="ECO:0000314"/>
    <property type="project" value="TAIR"/>
</dbReference>
<dbReference type="GO" id="GO:0042802">
    <property type="term" value="F:identical protein binding"/>
    <property type="evidence" value="ECO:0000353"/>
    <property type="project" value="IntAct"/>
</dbReference>
<dbReference type="GO" id="GO:0046872">
    <property type="term" value="F:metal ion binding"/>
    <property type="evidence" value="ECO:0007669"/>
    <property type="project" value="UniProtKB-KW"/>
</dbReference>
<dbReference type="GO" id="GO:0000155">
    <property type="term" value="F:phosphorelay sensor kinase activity"/>
    <property type="evidence" value="ECO:0007669"/>
    <property type="project" value="InterPro"/>
</dbReference>
<dbReference type="GO" id="GO:0004674">
    <property type="term" value="F:protein serine/threonine kinase activity"/>
    <property type="evidence" value="ECO:0000304"/>
    <property type="project" value="TAIR"/>
</dbReference>
<dbReference type="GO" id="GO:0009873">
    <property type="term" value="P:ethylene-activated signaling pathway"/>
    <property type="evidence" value="ECO:0007669"/>
    <property type="project" value="UniProtKB-KW"/>
</dbReference>
<dbReference type="GO" id="GO:0010105">
    <property type="term" value="P:negative regulation of ethylene-activated signaling pathway"/>
    <property type="evidence" value="ECO:0000304"/>
    <property type="project" value="TAIR"/>
</dbReference>
<dbReference type="CDD" id="cd16938">
    <property type="entry name" value="HATPase_ETR2_ERS2-EIN4-like"/>
    <property type="match status" value="1"/>
</dbReference>
<dbReference type="CDD" id="cd00082">
    <property type="entry name" value="HisKA"/>
    <property type="match status" value="1"/>
</dbReference>
<dbReference type="FunFam" id="1.10.287.130:FF:000087">
    <property type="entry name" value="Ethylene receptor 4"/>
    <property type="match status" value="1"/>
</dbReference>
<dbReference type="Gene3D" id="1.10.287.130">
    <property type="match status" value="1"/>
</dbReference>
<dbReference type="Gene3D" id="3.30.450.40">
    <property type="match status" value="1"/>
</dbReference>
<dbReference type="InterPro" id="IPR003018">
    <property type="entry name" value="GAF"/>
</dbReference>
<dbReference type="InterPro" id="IPR029016">
    <property type="entry name" value="GAF-like_dom_sf"/>
</dbReference>
<dbReference type="InterPro" id="IPR003661">
    <property type="entry name" value="HisK_dim/P_dom"/>
</dbReference>
<dbReference type="InterPro" id="IPR036097">
    <property type="entry name" value="HisK_dim/P_sf"/>
</dbReference>
<dbReference type="PANTHER" id="PTHR24423:SF638">
    <property type="entry name" value="ETHYLENE RESPONSE SENSOR 2"/>
    <property type="match status" value="1"/>
</dbReference>
<dbReference type="PANTHER" id="PTHR24423">
    <property type="entry name" value="TWO-COMPONENT SENSOR HISTIDINE KINASE"/>
    <property type="match status" value="1"/>
</dbReference>
<dbReference type="Pfam" id="PF25487">
    <property type="entry name" value="ETR1_N"/>
    <property type="match status" value="1"/>
</dbReference>
<dbReference type="Pfam" id="PF01590">
    <property type="entry name" value="GAF"/>
    <property type="match status" value="1"/>
</dbReference>
<dbReference type="Pfam" id="PF00512">
    <property type="entry name" value="HisKA"/>
    <property type="match status" value="1"/>
</dbReference>
<dbReference type="SMART" id="SM00065">
    <property type="entry name" value="GAF"/>
    <property type="match status" value="1"/>
</dbReference>
<dbReference type="SUPFAM" id="SSF55781">
    <property type="entry name" value="GAF domain-like"/>
    <property type="match status" value="1"/>
</dbReference>
<dbReference type="SUPFAM" id="SSF47384">
    <property type="entry name" value="Homodimeric domain of signal transducing histidine kinase"/>
    <property type="match status" value="1"/>
</dbReference>
<protein>
    <recommendedName>
        <fullName>Ethylene response sensor 2</fullName>
        <shortName>AtERS2</shortName>
        <ecNumber>2.7.11.-</ecNumber>
    </recommendedName>
    <alternativeName>
        <fullName>Protein ERS2</fullName>
    </alternativeName>
</protein>
<keyword id="KW-0067">ATP-binding</keyword>
<keyword id="KW-0186">Copper</keyword>
<keyword id="KW-1015">Disulfide bond</keyword>
<keyword id="KW-0256">Endoplasmic reticulum</keyword>
<keyword id="KW-0936">Ethylene signaling pathway</keyword>
<keyword id="KW-0418">Kinase</keyword>
<keyword id="KW-0472">Membrane</keyword>
<keyword id="KW-0479">Metal-binding</keyword>
<keyword id="KW-0547">Nucleotide-binding</keyword>
<keyword id="KW-0597">Phosphoprotein</keyword>
<keyword id="KW-0675">Receptor</keyword>
<keyword id="KW-1185">Reference proteome</keyword>
<keyword id="KW-0723">Serine/threonine-protein kinase</keyword>
<keyword id="KW-0808">Transferase</keyword>
<keyword id="KW-0812">Transmembrane</keyword>
<keyword id="KW-1133">Transmembrane helix</keyword>
<keyword id="KW-0902">Two-component regulatory system</keyword>
<accession>P93825</accession>
<accession>B0FVU3</accession>
<accession>B0FVU5</accession>
<accession>B0FVW8</accession>
<accession>B0FVX0</accession>
<accession>B0FVX9</accession>
<reference key="1">
    <citation type="journal article" date="1998" name="Plant Cell">
        <title>EIN4 and ERS2 are members of the putative ethylene receptor gene family in Arabidopsis.</title>
        <authorList>
            <person name="Hua J."/>
            <person name="Sakai H."/>
            <person name="Nourizadeh S."/>
            <person name="Chen Q.G."/>
            <person name="Bleecker A.B."/>
            <person name="Ecker J.R."/>
            <person name="Meyerowitz E.M."/>
        </authorList>
    </citation>
    <scope>NUCLEOTIDE SEQUENCE [GENOMIC DNA]</scope>
    <scope>MUTAGENESIS OF PRO-67 AND ILE-94</scope>
    <scope>INDUCTION BY ETHYLENE</scope>
    <scope>TISSUE SPECIFICITY</scope>
</reference>
<reference key="2">
    <citation type="journal article" date="2000" name="Nature">
        <title>Sequence and analysis of chromosome 1 of the plant Arabidopsis thaliana.</title>
        <authorList>
            <person name="Theologis A."/>
            <person name="Ecker J.R."/>
            <person name="Palm C.J."/>
            <person name="Federspiel N.A."/>
            <person name="Kaul S."/>
            <person name="White O."/>
            <person name="Alonso J."/>
            <person name="Altafi H."/>
            <person name="Araujo R."/>
            <person name="Bowman C.L."/>
            <person name="Brooks S.Y."/>
            <person name="Buehler E."/>
            <person name="Chan A."/>
            <person name="Chao Q."/>
            <person name="Chen H."/>
            <person name="Cheuk R.F."/>
            <person name="Chin C.W."/>
            <person name="Chung M.K."/>
            <person name="Conn L."/>
            <person name="Conway A.B."/>
            <person name="Conway A.R."/>
            <person name="Creasy T.H."/>
            <person name="Dewar K."/>
            <person name="Dunn P."/>
            <person name="Etgu P."/>
            <person name="Feldblyum T.V."/>
            <person name="Feng J.-D."/>
            <person name="Fong B."/>
            <person name="Fujii C.Y."/>
            <person name="Gill J.E."/>
            <person name="Goldsmith A.D."/>
            <person name="Haas B."/>
            <person name="Hansen N.F."/>
            <person name="Hughes B."/>
            <person name="Huizar L."/>
            <person name="Hunter J.L."/>
            <person name="Jenkins J."/>
            <person name="Johnson-Hopson C."/>
            <person name="Khan S."/>
            <person name="Khaykin E."/>
            <person name="Kim C.J."/>
            <person name="Koo H.L."/>
            <person name="Kremenetskaia I."/>
            <person name="Kurtz D.B."/>
            <person name="Kwan A."/>
            <person name="Lam B."/>
            <person name="Langin-Hooper S."/>
            <person name="Lee A."/>
            <person name="Lee J.M."/>
            <person name="Lenz C.A."/>
            <person name="Li J.H."/>
            <person name="Li Y.-P."/>
            <person name="Lin X."/>
            <person name="Liu S.X."/>
            <person name="Liu Z.A."/>
            <person name="Luros J.S."/>
            <person name="Maiti R."/>
            <person name="Marziali A."/>
            <person name="Militscher J."/>
            <person name="Miranda M."/>
            <person name="Nguyen M."/>
            <person name="Nierman W.C."/>
            <person name="Osborne B.I."/>
            <person name="Pai G."/>
            <person name="Peterson J."/>
            <person name="Pham P.K."/>
            <person name="Rizzo M."/>
            <person name="Rooney T."/>
            <person name="Rowley D."/>
            <person name="Sakano H."/>
            <person name="Salzberg S.L."/>
            <person name="Schwartz J.R."/>
            <person name="Shinn P."/>
            <person name="Southwick A.M."/>
            <person name="Sun H."/>
            <person name="Tallon L.J."/>
            <person name="Tambunga G."/>
            <person name="Toriumi M.J."/>
            <person name="Town C.D."/>
            <person name="Utterback T."/>
            <person name="Van Aken S."/>
            <person name="Vaysberg M."/>
            <person name="Vysotskaia V.S."/>
            <person name="Walker M."/>
            <person name="Wu D."/>
            <person name="Yu G."/>
            <person name="Fraser C.M."/>
            <person name="Venter J.C."/>
            <person name="Davis R.W."/>
        </authorList>
    </citation>
    <scope>NUCLEOTIDE SEQUENCE [LARGE SCALE GENOMIC DNA]</scope>
    <source>
        <strain>cv. Columbia</strain>
    </source>
</reference>
<reference key="3">
    <citation type="journal article" date="2017" name="Plant J.">
        <title>Araport11: a complete reannotation of the Arabidopsis thaliana reference genome.</title>
        <authorList>
            <person name="Cheng C.Y."/>
            <person name="Krishnakumar V."/>
            <person name="Chan A.P."/>
            <person name="Thibaud-Nissen F."/>
            <person name="Schobel S."/>
            <person name="Town C.D."/>
        </authorList>
    </citation>
    <scope>GENOME REANNOTATION</scope>
    <source>
        <strain>cv. Columbia</strain>
    </source>
</reference>
<reference key="4">
    <citation type="journal article" date="2008" name="J. Mol. Evol.">
        <title>Local patterns of nucleotide polymorphism are highly variable in the selfing species Arabidopsis thaliana.</title>
        <authorList>
            <person name="Moore R.C."/>
            <person name="Stevens M.H.H."/>
        </authorList>
    </citation>
    <scope>NUCLEOTIDE SEQUENCE [GENOMIC DNA] OF 5-337</scope>
    <source>
        <strain>cv. Ag-0</strain>
        <strain>cv. An-1</strain>
        <strain>cv. Bla-10</strain>
        <strain>cv. Br-0</strain>
        <strain>cv. C24</strain>
        <strain>cv. Chi-1</strain>
        <strain>cv. Co-1</strain>
        <strain>cv. Columbia</strain>
        <strain>cv. Ct-1</strain>
        <strain>cv. Cvi-0</strain>
        <strain>cv. Da(1)-12</strain>
        <strain>cv. Di-G</strain>
        <strain>cv. Edi-0</strain>
        <strain>cv. Ei-2</strain>
        <strain>cv. El-0</strain>
        <strain>cv. Ga-0</strain>
        <strain>cv. Gr-3</strain>
        <strain>cv. Gu-0</strain>
        <strain>cv. Gy-0</strain>
        <strain>cv. Kas-1</strain>
        <strain>cv. Kn-0</strain>
        <strain>cv. Landsberg erecta</strain>
        <strain>cv. Li-3</strain>
        <strain>cv. Ll-0</strain>
        <strain>cv. Mrk-0</strain>
        <strain>cv. Mt-0</strain>
        <strain>cv. Mz-0</strain>
        <strain>cv. Ove-0</strain>
        <strain>cv. Oy-0</strain>
        <strain>cv. PHW-1</strain>
        <strain>cv. PHW-32</strain>
        <strain>cv. PHW-36</strain>
        <strain>cv. Se-0</strain>
        <strain>cv. Sha</strain>
        <strain>cv. Sorbo</strain>
        <strain>cv. Stw-0</strain>
        <strain>cv. Ta-0</strain>
        <strain>cv. Ts-5</strain>
        <strain>cv. Wassilewskija</strain>
        <strain>cv. Wei-0</strain>
    </source>
</reference>
<reference key="5">
    <citation type="journal article" date="2004" name="J. Biol. Chem.">
        <title>Autophosphorylation activity of the Arabidopsis ethylene receptor multigene family.</title>
        <authorList>
            <person name="Moussatche P."/>
            <person name="Klee H.J."/>
        </authorList>
    </citation>
    <scope>PHOSPHORYLATION</scope>
</reference>